<organism>
    <name type="scientific">Arabidopsis thaliana</name>
    <name type="common">Mouse-ear cress</name>
    <dbReference type="NCBI Taxonomy" id="3702"/>
    <lineage>
        <taxon>Eukaryota</taxon>
        <taxon>Viridiplantae</taxon>
        <taxon>Streptophyta</taxon>
        <taxon>Embryophyta</taxon>
        <taxon>Tracheophyta</taxon>
        <taxon>Spermatophyta</taxon>
        <taxon>Magnoliopsida</taxon>
        <taxon>eudicotyledons</taxon>
        <taxon>Gunneridae</taxon>
        <taxon>Pentapetalae</taxon>
        <taxon>rosids</taxon>
        <taxon>malvids</taxon>
        <taxon>Brassicales</taxon>
        <taxon>Brassicaceae</taxon>
        <taxon>Camelineae</taxon>
        <taxon>Arabidopsis</taxon>
    </lineage>
</organism>
<keyword id="KW-0175">Coiled coil</keyword>
<keyword id="KW-0449">Lipoprotein</keyword>
<keyword id="KW-0479">Metal-binding</keyword>
<keyword id="KW-0488">Methylation</keyword>
<keyword id="KW-0636">Prenylation</keyword>
<keyword id="KW-1185">Reference proteome</keyword>
<reference key="1">
    <citation type="journal article" date="2000" name="Nature">
        <title>Sequence and analysis of chromosome 1 of the plant Arabidopsis thaliana.</title>
        <authorList>
            <person name="Theologis A."/>
            <person name="Ecker J.R."/>
            <person name="Palm C.J."/>
            <person name="Federspiel N.A."/>
            <person name="Kaul S."/>
            <person name="White O."/>
            <person name="Alonso J."/>
            <person name="Altafi H."/>
            <person name="Araujo R."/>
            <person name="Bowman C.L."/>
            <person name="Brooks S.Y."/>
            <person name="Buehler E."/>
            <person name="Chan A."/>
            <person name="Chao Q."/>
            <person name="Chen H."/>
            <person name="Cheuk R.F."/>
            <person name="Chin C.W."/>
            <person name="Chung M.K."/>
            <person name="Conn L."/>
            <person name="Conway A.B."/>
            <person name="Conway A.R."/>
            <person name="Creasy T.H."/>
            <person name="Dewar K."/>
            <person name="Dunn P."/>
            <person name="Etgu P."/>
            <person name="Feldblyum T.V."/>
            <person name="Feng J.-D."/>
            <person name="Fong B."/>
            <person name="Fujii C.Y."/>
            <person name="Gill J.E."/>
            <person name="Goldsmith A.D."/>
            <person name="Haas B."/>
            <person name="Hansen N.F."/>
            <person name="Hughes B."/>
            <person name="Huizar L."/>
            <person name="Hunter J.L."/>
            <person name="Jenkins J."/>
            <person name="Johnson-Hopson C."/>
            <person name="Khan S."/>
            <person name="Khaykin E."/>
            <person name="Kim C.J."/>
            <person name="Koo H.L."/>
            <person name="Kremenetskaia I."/>
            <person name="Kurtz D.B."/>
            <person name="Kwan A."/>
            <person name="Lam B."/>
            <person name="Langin-Hooper S."/>
            <person name="Lee A."/>
            <person name="Lee J.M."/>
            <person name="Lenz C.A."/>
            <person name="Li J.H."/>
            <person name="Li Y.-P."/>
            <person name="Lin X."/>
            <person name="Liu S.X."/>
            <person name="Liu Z.A."/>
            <person name="Luros J.S."/>
            <person name="Maiti R."/>
            <person name="Marziali A."/>
            <person name="Militscher J."/>
            <person name="Miranda M."/>
            <person name="Nguyen M."/>
            <person name="Nierman W.C."/>
            <person name="Osborne B.I."/>
            <person name="Pai G."/>
            <person name="Peterson J."/>
            <person name="Pham P.K."/>
            <person name="Rizzo M."/>
            <person name="Rooney T."/>
            <person name="Rowley D."/>
            <person name="Sakano H."/>
            <person name="Salzberg S.L."/>
            <person name="Schwartz J.R."/>
            <person name="Shinn P."/>
            <person name="Southwick A.M."/>
            <person name="Sun H."/>
            <person name="Tallon L.J."/>
            <person name="Tambunga G."/>
            <person name="Toriumi M.J."/>
            <person name="Town C.D."/>
            <person name="Utterback T."/>
            <person name="Van Aken S."/>
            <person name="Vaysberg M."/>
            <person name="Vysotskaia V.S."/>
            <person name="Walker M."/>
            <person name="Wu D."/>
            <person name="Yu G."/>
            <person name="Fraser C.M."/>
            <person name="Venter J.C."/>
            <person name="Davis R.W."/>
        </authorList>
    </citation>
    <scope>NUCLEOTIDE SEQUENCE [LARGE SCALE GENOMIC DNA]</scope>
    <source>
        <strain>cv. Columbia</strain>
    </source>
</reference>
<reference key="2">
    <citation type="journal article" date="2017" name="Plant J.">
        <title>Araport11: a complete reannotation of the Arabidopsis thaliana reference genome.</title>
        <authorList>
            <person name="Cheng C.Y."/>
            <person name="Krishnakumar V."/>
            <person name="Chan A.P."/>
            <person name="Thibaud-Nissen F."/>
            <person name="Schobel S."/>
            <person name="Town C.D."/>
        </authorList>
    </citation>
    <scope>GENOME REANNOTATION</scope>
    <source>
        <strain>cv. Columbia</strain>
    </source>
</reference>
<reference key="3">
    <citation type="submission" date="2005-05" db="EMBL/GenBank/DDBJ databases">
        <authorList>
            <person name="Underwood B.A."/>
            <person name="Xiao Y.-L."/>
            <person name="Moskal W.A. Jr."/>
            <person name="Monaghan E.L."/>
            <person name="Wang W."/>
            <person name="Redman J.C."/>
            <person name="Wu H.C."/>
            <person name="Utterback T."/>
            <person name="Town C.D."/>
        </authorList>
    </citation>
    <scope>NUCLEOTIDE SEQUENCE [LARGE SCALE MRNA]</scope>
    <source>
        <strain>cv. Columbia</strain>
    </source>
</reference>
<reference key="4">
    <citation type="journal article" date="2005" name="Plant Physiol.">
        <title>Analysis of the female gametophyte transcriptome of Arabidopsis by comparative expression profiling.</title>
        <authorList>
            <person name="Yu H.-J."/>
            <person name="Hogan P."/>
            <person name="Sundaresan V."/>
        </authorList>
    </citation>
    <scope>TISSUE SPECIFICITY</scope>
</reference>
<reference key="5">
    <citation type="journal article" date="2010" name="Metallomics">
        <title>Metallochaperone-like genes in Arabidopsis thaliana.</title>
        <authorList>
            <person name="Tehseen M."/>
            <person name="Cairns N."/>
            <person name="Sherson S."/>
            <person name="Cobbett C.S."/>
        </authorList>
    </citation>
    <scope>GENE FAMILY</scope>
    <scope>NOMENCLATURE</scope>
</reference>
<reference key="6">
    <citation type="journal article" date="2013" name="FEBS J.">
        <title>Heavy metal-associated isoprenylated plant protein (HIPP): characterization of a family of proteins exclusive to plants.</title>
        <authorList>
            <person name="de Abreu-Neto J.B."/>
            <person name="Turchetto-Zolet A.C."/>
            <person name="de Oliveira L.F."/>
            <person name="Zanettini M.H."/>
            <person name="Margis-Pinheiro M."/>
        </authorList>
    </citation>
    <scope>GENE FAMILY</scope>
    <scope>NOMENCLATURE</scope>
</reference>
<accession>Q9CAK6</accession>
<proteinExistence type="evidence at transcript level"/>
<comment type="function">
    <text evidence="1">Probable heavy-metal-binding protein.</text>
</comment>
<comment type="tissue specificity">
    <text evidence="5">Expressed in embryo sacs.</text>
</comment>
<comment type="similarity">
    <text evidence="8">Belongs to the HIPP family.</text>
</comment>
<comment type="caution">
    <text evidence="9">The HMA domain lacks the core conserved Cys-X-X-Cys motif.</text>
</comment>
<dbReference type="EMBL" id="AC010852">
    <property type="protein sequence ID" value="AAG52453.1"/>
    <property type="molecule type" value="Genomic_DNA"/>
</dbReference>
<dbReference type="EMBL" id="CP002684">
    <property type="protein sequence ID" value="AEE34172.1"/>
    <property type="molecule type" value="Genomic_DNA"/>
</dbReference>
<dbReference type="EMBL" id="DQ056506">
    <property type="protein sequence ID" value="AAY78663.1"/>
    <property type="molecule type" value="mRNA"/>
</dbReference>
<dbReference type="PIR" id="F96664">
    <property type="entry name" value="F96664"/>
</dbReference>
<dbReference type="RefSeq" id="NP_176578.1">
    <property type="nucleotide sequence ID" value="NM_105068.2"/>
</dbReference>
<dbReference type="SMR" id="Q9CAK6"/>
<dbReference type="FunCoup" id="Q9CAK6">
    <property type="interactions" value="55"/>
</dbReference>
<dbReference type="PaxDb" id="3702-AT1G63950.1"/>
<dbReference type="ProteomicsDB" id="230341"/>
<dbReference type="EnsemblPlants" id="AT1G63950.1">
    <property type="protein sequence ID" value="AT1G63950.1"/>
    <property type="gene ID" value="AT1G63950"/>
</dbReference>
<dbReference type="GeneID" id="842698"/>
<dbReference type="Gramene" id="AT1G63950.1">
    <property type="protein sequence ID" value="AT1G63950.1"/>
    <property type="gene ID" value="AT1G63950"/>
</dbReference>
<dbReference type="KEGG" id="ath:AT1G63950"/>
<dbReference type="Araport" id="AT1G63950"/>
<dbReference type="TAIR" id="AT1G63950"/>
<dbReference type="eggNOG" id="KOG1603">
    <property type="taxonomic scope" value="Eukaryota"/>
</dbReference>
<dbReference type="HOGENOM" id="CLU_2136930_0_0_1"/>
<dbReference type="InParanoid" id="Q9CAK6"/>
<dbReference type="OrthoDB" id="691258at2759"/>
<dbReference type="PhylomeDB" id="Q9CAK6"/>
<dbReference type="PRO" id="PR:Q9CAK6"/>
<dbReference type="Proteomes" id="UP000006548">
    <property type="component" value="Chromosome 1"/>
</dbReference>
<dbReference type="ExpressionAtlas" id="Q9CAK6">
    <property type="expression patterns" value="baseline and differential"/>
</dbReference>
<dbReference type="GO" id="GO:0046872">
    <property type="term" value="F:metal ion binding"/>
    <property type="evidence" value="ECO:0007669"/>
    <property type="project" value="UniProtKB-KW"/>
</dbReference>
<dbReference type="Gene3D" id="3.30.70.100">
    <property type="match status" value="1"/>
</dbReference>
<dbReference type="InterPro" id="IPR051863">
    <property type="entry name" value="HIPP"/>
</dbReference>
<dbReference type="InterPro" id="IPR006121">
    <property type="entry name" value="HMA_dom"/>
</dbReference>
<dbReference type="InterPro" id="IPR036163">
    <property type="entry name" value="HMA_dom_sf"/>
</dbReference>
<dbReference type="PANTHER" id="PTHR45811">
    <property type="entry name" value="COPPER TRANSPORT PROTEIN FAMILY-RELATED"/>
    <property type="match status" value="1"/>
</dbReference>
<dbReference type="PANTHER" id="PTHR45811:SF50">
    <property type="entry name" value="HEAVY METAL-ASSOCIATED ISOPRENYLATED PLANT PROTEIN 12-RELATED"/>
    <property type="match status" value="1"/>
</dbReference>
<dbReference type="Pfam" id="PF00403">
    <property type="entry name" value="HMA"/>
    <property type="match status" value="1"/>
</dbReference>
<dbReference type="SUPFAM" id="SSF55008">
    <property type="entry name" value="HMA, heavy metal-associated domain"/>
    <property type="match status" value="1"/>
</dbReference>
<dbReference type="PROSITE" id="PS50846">
    <property type="entry name" value="HMA_2"/>
    <property type="match status" value="1"/>
</dbReference>
<protein>
    <recommendedName>
        <fullName evidence="6 7">Heavy metal-associated isoprenylated plant protein 15</fullName>
        <shortName evidence="6 7">AtHIP15</shortName>
    </recommendedName>
</protein>
<gene>
    <name evidence="6 7" type="primary">HIPP15</name>
    <name evidence="10" type="ordered locus">At1g63950</name>
    <name evidence="11" type="ORF">T12P18.3</name>
</gene>
<name>HIP15_ARATH</name>
<evidence type="ECO:0000250" key="1">
    <source>
        <dbReference type="UniProtKB" id="Q9LZF1"/>
    </source>
</evidence>
<evidence type="ECO:0000250" key="2">
    <source>
        <dbReference type="UniProtKB" id="Q9SZN7"/>
    </source>
</evidence>
<evidence type="ECO:0000255" key="3"/>
<evidence type="ECO:0000255" key="4">
    <source>
        <dbReference type="PROSITE-ProRule" id="PRU00280"/>
    </source>
</evidence>
<evidence type="ECO:0000269" key="5">
    <source>
    </source>
</evidence>
<evidence type="ECO:0000303" key="6">
    <source>
    </source>
</evidence>
<evidence type="ECO:0000303" key="7">
    <source>
    </source>
</evidence>
<evidence type="ECO:0000305" key="8"/>
<evidence type="ECO:0000305" key="9">
    <source>
    </source>
</evidence>
<evidence type="ECO:0000312" key="10">
    <source>
        <dbReference type="Araport" id="AT1G63950"/>
    </source>
</evidence>
<evidence type="ECO:0000312" key="11">
    <source>
        <dbReference type="EMBL" id="AAG52453.1"/>
    </source>
</evidence>
<sequence>MIVWMGVYDQRSKGKITKSISDLPGIHSSYMDLKEGTLVVMGDVDPVELVRNLRKKWGKAKLTLYVPYDALKEAKIAEAKQKREEIEREALYRYNREIRDIFNDKEEQGCVIC</sequence>
<feature type="chain" id="PRO_0000437819" description="Heavy metal-associated isoprenylated plant protein 15">
    <location>
        <begin position="1"/>
        <end position="110"/>
    </location>
</feature>
<feature type="propeptide" id="PRO_0000437820" description="Removed in mature form" evidence="8">
    <location>
        <begin position="111"/>
        <end position="113"/>
    </location>
</feature>
<feature type="domain" description="HMA" evidence="4">
    <location>
        <begin position="1"/>
        <end position="65"/>
    </location>
</feature>
<feature type="coiled-coil region" evidence="3">
    <location>
        <begin position="69"/>
        <end position="89"/>
    </location>
</feature>
<feature type="modified residue" description="Cysteine methyl ester" evidence="2">
    <location>
        <position position="110"/>
    </location>
</feature>
<feature type="lipid moiety-binding region" description="S-farnesyl cysteine" evidence="2">
    <location>
        <position position="110"/>
    </location>
</feature>